<accession>Q92JB3</accession>
<sequence>MQIYPLRLLPNKIDFDFMNFKKVSYTFSIILSLISFIWIGIYKFNFGIDFAGGIVIEVRLDQAPDLPKMRGVLGKLGIGEVVLQNFGSERDLSIRFGSSSEENLMKNIELIKGFLQSNFPYKFEYRKVDFVGPQVGRQLIEAGAMAMLFSFLAIMVYIWVRFEWYFGLGILIALVHDVILALGFMSMTKLDFNLSTIAAVLTIIGYSVNDSVVIYDRIRENLRKYHKKNITEIINLSINETLSRTILTVITTLLANLALILFGGEAIRSFSVLVFFGIIAGTYSSIFISAPILTMFVNRKFNKKVIER</sequence>
<proteinExistence type="inferred from homology"/>
<gene>
    <name evidence="1" type="primary">secF</name>
    <name type="ordered locus">RC0154</name>
</gene>
<organism>
    <name type="scientific">Rickettsia conorii (strain ATCC VR-613 / Malish 7)</name>
    <dbReference type="NCBI Taxonomy" id="272944"/>
    <lineage>
        <taxon>Bacteria</taxon>
        <taxon>Pseudomonadati</taxon>
        <taxon>Pseudomonadota</taxon>
        <taxon>Alphaproteobacteria</taxon>
        <taxon>Rickettsiales</taxon>
        <taxon>Rickettsiaceae</taxon>
        <taxon>Rickettsieae</taxon>
        <taxon>Rickettsia</taxon>
        <taxon>spotted fever group</taxon>
    </lineage>
</organism>
<feature type="chain" id="PRO_0000272638" description="Protein translocase subunit SecF">
    <location>
        <begin position="1"/>
        <end position="308"/>
    </location>
</feature>
<feature type="transmembrane region" description="Helical" evidence="1">
    <location>
        <begin position="28"/>
        <end position="48"/>
    </location>
</feature>
<feature type="transmembrane region" description="Helical" evidence="1">
    <location>
        <begin position="140"/>
        <end position="160"/>
    </location>
</feature>
<feature type="transmembrane region" description="Helical" evidence="1">
    <location>
        <begin position="164"/>
        <end position="184"/>
    </location>
</feature>
<feature type="transmembrane region" description="Helical" evidence="1">
    <location>
        <begin position="194"/>
        <end position="214"/>
    </location>
</feature>
<feature type="transmembrane region" description="Helical" evidence="1">
    <location>
        <begin position="246"/>
        <end position="266"/>
    </location>
</feature>
<feature type="transmembrane region" description="Helical" evidence="1">
    <location>
        <begin position="272"/>
        <end position="292"/>
    </location>
</feature>
<protein>
    <recommendedName>
        <fullName>Protein translocase subunit SecF</fullName>
    </recommendedName>
</protein>
<name>SECF_RICCN</name>
<keyword id="KW-0997">Cell inner membrane</keyword>
<keyword id="KW-1003">Cell membrane</keyword>
<keyword id="KW-0472">Membrane</keyword>
<keyword id="KW-0653">Protein transport</keyword>
<keyword id="KW-0811">Translocation</keyword>
<keyword id="KW-0812">Transmembrane</keyword>
<keyword id="KW-1133">Transmembrane helix</keyword>
<keyword id="KW-0813">Transport</keyword>
<dbReference type="EMBL" id="AE006914">
    <property type="protein sequence ID" value="AAL02692.1"/>
    <property type="molecule type" value="Genomic_DNA"/>
</dbReference>
<dbReference type="PIR" id="B97719">
    <property type="entry name" value="B97719"/>
</dbReference>
<dbReference type="RefSeq" id="WP_010976830.1">
    <property type="nucleotide sequence ID" value="NC_003103.1"/>
</dbReference>
<dbReference type="SMR" id="Q92JB3"/>
<dbReference type="GeneID" id="928040"/>
<dbReference type="KEGG" id="rco:RC0154"/>
<dbReference type="PATRIC" id="fig|272944.4.peg.182"/>
<dbReference type="HOGENOM" id="CLU_050012_1_1_5"/>
<dbReference type="Proteomes" id="UP000000816">
    <property type="component" value="Chromosome"/>
</dbReference>
<dbReference type="GO" id="GO:0005886">
    <property type="term" value="C:plasma membrane"/>
    <property type="evidence" value="ECO:0007669"/>
    <property type="project" value="UniProtKB-SubCell"/>
</dbReference>
<dbReference type="GO" id="GO:0015450">
    <property type="term" value="F:protein-transporting ATPase activity"/>
    <property type="evidence" value="ECO:0007669"/>
    <property type="project" value="InterPro"/>
</dbReference>
<dbReference type="GO" id="GO:0065002">
    <property type="term" value="P:intracellular protein transmembrane transport"/>
    <property type="evidence" value="ECO:0007669"/>
    <property type="project" value="UniProtKB-UniRule"/>
</dbReference>
<dbReference type="GO" id="GO:0006605">
    <property type="term" value="P:protein targeting"/>
    <property type="evidence" value="ECO:0007669"/>
    <property type="project" value="UniProtKB-UniRule"/>
</dbReference>
<dbReference type="GO" id="GO:0043952">
    <property type="term" value="P:protein transport by the Sec complex"/>
    <property type="evidence" value="ECO:0007669"/>
    <property type="project" value="UniProtKB-UniRule"/>
</dbReference>
<dbReference type="FunFam" id="1.20.1640.10:FF:000024">
    <property type="entry name" value="Multifunctional fusion protein"/>
    <property type="match status" value="1"/>
</dbReference>
<dbReference type="Gene3D" id="1.20.1640.10">
    <property type="entry name" value="Multidrug efflux transporter AcrB transmembrane domain"/>
    <property type="match status" value="1"/>
</dbReference>
<dbReference type="HAMAP" id="MF_01464_B">
    <property type="entry name" value="SecF_B"/>
    <property type="match status" value="1"/>
</dbReference>
<dbReference type="InterPro" id="IPR022813">
    <property type="entry name" value="SecD/SecF_arch_bac"/>
</dbReference>
<dbReference type="InterPro" id="IPR022645">
    <property type="entry name" value="SecD/SecF_bac"/>
</dbReference>
<dbReference type="InterPro" id="IPR022646">
    <property type="entry name" value="SecD/SecF_CS"/>
</dbReference>
<dbReference type="InterPro" id="IPR048634">
    <property type="entry name" value="SecD_SecF_C"/>
</dbReference>
<dbReference type="InterPro" id="IPR055344">
    <property type="entry name" value="SecD_SecF_C_bact"/>
</dbReference>
<dbReference type="InterPro" id="IPR005665">
    <property type="entry name" value="SecF_bac"/>
</dbReference>
<dbReference type="InterPro" id="IPR000731">
    <property type="entry name" value="SSD"/>
</dbReference>
<dbReference type="NCBIfam" id="TIGR00916">
    <property type="entry name" value="2A0604s01"/>
    <property type="match status" value="1"/>
</dbReference>
<dbReference type="NCBIfam" id="TIGR00966">
    <property type="entry name" value="transloc_SecF"/>
    <property type="match status" value="1"/>
</dbReference>
<dbReference type="PANTHER" id="PTHR30081:SF8">
    <property type="entry name" value="PROTEIN TRANSLOCASE SUBUNIT SECF"/>
    <property type="match status" value="1"/>
</dbReference>
<dbReference type="PANTHER" id="PTHR30081">
    <property type="entry name" value="PROTEIN-EXPORT MEMBRANE PROTEIN SEC"/>
    <property type="match status" value="1"/>
</dbReference>
<dbReference type="Pfam" id="PF07549">
    <property type="entry name" value="Sec_GG"/>
    <property type="match status" value="1"/>
</dbReference>
<dbReference type="Pfam" id="PF02355">
    <property type="entry name" value="SecD_SecF_C"/>
    <property type="match status" value="1"/>
</dbReference>
<dbReference type="PRINTS" id="PR01755">
    <property type="entry name" value="SECFTRNLCASE"/>
</dbReference>
<dbReference type="SUPFAM" id="SSF82866">
    <property type="entry name" value="Multidrug efflux transporter AcrB transmembrane domain"/>
    <property type="match status" value="1"/>
</dbReference>
<dbReference type="PROSITE" id="PS50156">
    <property type="entry name" value="SSD"/>
    <property type="match status" value="1"/>
</dbReference>
<reference key="1">
    <citation type="journal article" date="2001" name="Science">
        <title>Mechanisms of evolution in Rickettsia conorii and R. prowazekii.</title>
        <authorList>
            <person name="Ogata H."/>
            <person name="Audic S."/>
            <person name="Renesto-Audiffren P."/>
            <person name="Fournier P.-E."/>
            <person name="Barbe V."/>
            <person name="Samson D."/>
            <person name="Roux V."/>
            <person name="Cossart P."/>
            <person name="Weissenbach J."/>
            <person name="Claverie J.-M."/>
            <person name="Raoult D."/>
        </authorList>
    </citation>
    <scope>NUCLEOTIDE SEQUENCE [LARGE SCALE GENOMIC DNA]</scope>
    <source>
        <strain>ATCC VR-613 / Malish 7</strain>
    </source>
</reference>
<comment type="function">
    <text evidence="1">Part of the Sec protein translocase complex. Interacts with the SecYEG preprotein conducting channel. SecDF uses the proton motive force (PMF) to complete protein translocation after the ATP-dependent function of SecA.</text>
</comment>
<comment type="subunit">
    <text evidence="1">Forms a complex with SecD. Part of the essential Sec protein translocation apparatus which comprises SecA, SecYEG and auxiliary proteins SecDF-YajC and YidC.</text>
</comment>
<comment type="subcellular location">
    <subcellularLocation>
        <location evidence="1">Cell inner membrane</location>
        <topology evidence="1">Multi-pass membrane protein</topology>
    </subcellularLocation>
</comment>
<comment type="similarity">
    <text evidence="1">Belongs to the SecD/SecF family. SecF subfamily.</text>
</comment>
<evidence type="ECO:0000255" key="1">
    <source>
        <dbReference type="HAMAP-Rule" id="MF_01464"/>
    </source>
</evidence>